<proteinExistence type="evidence at protein level"/>
<organism>
    <name type="scientific">Clostridium perfringens</name>
    <dbReference type="NCBI Taxonomy" id="1502"/>
    <lineage>
        <taxon>Bacteria</taxon>
        <taxon>Bacillati</taxon>
        <taxon>Bacillota</taxon>
        <taxon>Clostridia</taxon>
        <taxon>Eubacteriales</taxon>
        <taxon>Clostridiaceae</taxon>
        <taxon>Clostridium</taxon>
    </lineage>
</organism>
<sequence>MKRKIYKLLICATIATSLWAVRTTKVYAWDGKADGTGTHAMIATQGVTILENDLSSNEPEVIRNNLEILKQNMHDLQLGSTYPDYDKNAYDLYQDHFWDPDTDNNFTKDSKWYLSYSIPDTAESQIRKFSALARYEWKRGNYKQATFYLGEAMHYFGDADTPYHAANVTAVDSPGHVKFETFAEDRKDQYKINTTGSKTNDAFYSNILTNEDFNSWSKEFARSFAKTAKDLYYSHANMSCSWDEWDYAAKVALANSQKGTSGYIYRFLHDVSDGKDSSANKNVNELVAYITTGGEKYAGTDDYMYFGIKTKDGQTQEWTMDNPGNDFMTGSQDTYTFKLKDKNLKIDDIQNMWIRKSKYTEFGDDYKPANIKVIANGNVVLNKDINEWISGNSTYNIK</sequence>
<feature type="signal peptide" evidence="1">
    <location>
        <begin position="1"/>
        <end position="28"/>
    </location>
</feature>
<feature type="chain" id="PRO_0000023932" description="Phospholipase C">
    <location>
        <begin position="29"/>
        <end position="398"/>
    </location>
</feature>
<feature type="domain" description="Zn-dependent PLC" evidence="3">
    <location>
        <begin position="29"/>
        <end position="278"/>
    </location>
</feature>
<feature type="domain" description="PLAT" evidence="2">
    <location>
        <begin position="284"/>
        <end position="398"/>
    </location>
</feature>
<feature type="region of interest" description="Linker">
    <location>
        <begin position="275"/>
        <end position="283"/>
    </location>
</feature>
<feature type="binding site">
    <location>
        <position position="29"/>
    </location>
    <ligand>
        <name>Zn(2+)</name>
        <dbReference type="ChEBI" id="CHEBI:29105"/>
        <label>1</label>
    </ligand>
</feature>
<feature type="binding site">
    <location>
        <position position="39"/>
    </location>
    <ligand>
        <name>Zn(2+)</name>
        <dbReference type="ChEBI" id="CHEBI:29105"/>
        <label>1</label>
    </ligand>
</feature>
<feature type="binding site">
    <location>
        <position position="84"/>
    </location>
    <ligand>
        <name>Zn(2+)</name>
        <dbReference type="ChEBI" id="CHEBI:29105"/>
        <label>3</label>
    </ligand>
</feature>
<feature type="binding site">
    <location>
        <position position="96"/>
    </location>
    <ligand>
        <name>Zn(2+)</name>
        <dbReference type="ChEBI" id="CHEBI:29105"/>
        <label>3</label>
    </ligand>
</feature>
<feature type="binding site">
    <location>
        <position position="154"/>
    </location>
    <ligand>
        <name>Zn(2+)</name>
        <dbReference type="ChEBI" id="CHEBI:29105"/>
        <label>3</label>
    </ligand>
</feature>
<feature type="binding site">
    <location>
        <position position="158"/>
    </location>
    <ligand>
        <name>Zn(2+)</name>
        <dbReference type="ChEBI" id="CHEBI:29105"/>
        <label>1</label>
    </ligand>
</feature>
<feature type="binding site">
    <location>
        <position position="158"/>
    </location>
    <ligand>
        <name>Zn(2+)</name>
        <dbReference type="ChEBI" id="CHEBI:29105"/>
        <label>3</label>
    </ligand>
</feature>
<feature type="binding site">
    <location>
        <position position="164"/>
    </location>
    <ligand>
        <name>Zn(2+)</name>
        <dbReference type="ChEBI" id="CHEBI:29105"/>
        <label>2</label>
    </ligand>
</feature>
<feature type="binding site">
    <location>
        <position position="176"/>
    </location>
    <ligand>
        <name>Zn(2+)</name>
        <dbReference type="ChEBI" id="CHEBI:29105"/>
        <label>2</label>
    </ligand>
</feature>
<feature type="binding site">
    <location>
        <position position="180"/>
    </location>
    <ligand>
        <name>Zn(2+)</name>
        <dbReference type="ChEBI" id="CHEBI:29105"/>
        <label>2</label>
    </ligand>
</feature>
<feature type="binding site" evidence="1">
    <location>
        <position position="299"/>
    </location>
    <ligand>
        <name>Ca(2+)</name>
        <dbReference type="ChEBI" id="CHEBI:29108"/>
        <label>1</label>
    </ligand>
</feature>
<feature type="binding site" evidence="1">
    <location>
        <position position="300"/>
    </location>
    <ligand>
        <name>Ca(2+)</name>
        <dbReference type="ChEBI" id="CHEBI:29108"/>
        <label>3</label>
    </ligand>
</feature>
<feature type="binding site" evidence="1">
    <location>
        <position position="301"/>
    </location>
    <ligand>
        <name>Ca(2+)</name>
        <dbReference type="ChEBI" id="CHEBI:29108"/>
        <label>3</label>
    </ligand>
</feature>
<feature type="binding site" evidence="1">
    <location>
        <position position="321"/>
    </location>
    <ligand>
        <name>Ca(2+)</name>
        <dbReference type="ChEBI" id="CHEBI:29108"/>
        <label>2</label>
    </ligand>
</feature>
<feature type="binding site" evidence="1">
    <location>
        <position position="322"/>
    </location>
    <ligand>
        <name>Ca(2+)</name>
        <dbReference type="ChEBI" id="CHEBI:29108"/>
        <label>2</label>
    </ligand>
</feature>
<feature type="binding site" evidence="1">
    <location>
        <position position="324"/>
    </location>
    <ligand>
        <name>Ca(2+)</name>
        <dbReference type="ChEBI" id="CHEBI:29108"/>
        <label>2</label>
    </ligand>
</feature>
<feature type="binding site" evidence="1">
    <location>
        <position position="325"/>
    </location>
    <ligand>
        <name>Ca(2+)</name>
        <dbReference type="ChEBI" id="CHEBI:29108"/>
        <label>3</label>
    </ligand>
</feature>
<feature type="binding site" evidence="1">
    <location>
        <position position="326"/>
    </location>
    <ligand>
        <name>Ca(2+)</name>
        <dbReference type="ChEBI" id="CHEBI:29108"/>
        <label>2</label>
    </ligand>
</feature>
<feature type="binding site" evidence="1">
    <location>
        <position position="326"/>
    </location>
    <ligand>
        <name>Ca(2+)</name>
        <dbReference type="ChEBI" id="CHEBI:29108"/>
        <label>3</label>
    </ligand>
</feature>
<feature type="binding site" evidence="1">
    <location>
        <position position="365"/>
    </location>
    <ligand>
        <name>Ca(2+)</name>
        <dbReference type="ChEBI" id="CHEBI:29108"/>
        <label>1</label>
    </ligand>
</feature>
<feature type="turn" evidence="4">
    <location>
        <begin position="33"/>
        <end position="35"/>
    </location>
</feature>
<feature type="helix" evidence="4">
    <location>
        <begin position="38"/>
        <end position="53"/>
    </location>
</feature>
<feature type="helix" evidence="4">
    <location>
        <begin position="60"/>
        <end position="71"/>
    </location>
</feature>
<feature type="helix" evidence="4">
    <location>
        <begin position="73"/>
        <end position="81"/>
    </location>
</feature>
<feature type="helix" evidence="4">
    <location>
        <begin position="82"/>
        <end position="84"/>
    </location>
</feature>
<feature type="helix" evidence="4">
    <location>
        <begin position="94"/>
        <end position="96"/>
    </location>
</feature>
<feature type="turn" evidence="4">
    <location>
        <begin position="100"/>
        <end position="102"/>
    </location>
</feature>
<feature type="strand" evidence="4">
    <location>
        <begin position="103"/>
        <end position="105"/>
    </location>
</feature>
<feature type="helix" evidence="4">
    <location>
        <begin position="111"/>
        <end position="114"/>
    </location>
</feature>
<feature type="helix" evidence="4">
    <location>
        <begin position="122"/>
        <end position="138"/>
    </location>
</feature>
<feature type="helix" evidence="4">
    <location>
        <begin position="142"/>
        <end position="159"/>
    </location>
</feature>
<feature type="helix" evidence="4">
    <location>
        <begin position="162"/>
        <end position="165"/>
    </location>
</feature>
<feature type="turn" evidence="4">
    <location>
        <begin position="170"/>
        <end position="172"/>
    </location>
</feature>
<feature type="helix" evidence="4">
    <location>
        <begin position="175"/>
        <end position="185"/>
    </location>
</feature>
<feature type="helix" evidence="4">
    <location>
        <begin position="187"/>
        <end position="190"/>
    </location>
</feature>
<feature type="helix" evidence="4">
    <location>
        <begin position="202"/>
        <end position="208"/>
    </location>
</feature>
<feature type="helix" evidence="4">
    <location>
        <begin position="213"/>
        <end position="234"/>
    </location>
</feature>
<feature type="helix" evidence="4">
    <location>
        <begin position="242"/>
        <end position="272"/>
    </location>
</feature>
<feature type="strand" evidence="4">
    <location>
        <begin position="285"/>
        <end position="292"/>
    </location>
</feature>
<feature type="strand" evidence="4">
    <location>
        <begin position="302"/>
        <end position="310"/>
    </location>
</feature>
<feature type="strand" evidence="4">
    <location>
        <begin position="315"/>
        <end position="319"/>
    </location>
</feature>
<feature type="strand" evidence="4">
    <location>
        <begin position="332"/>
        <end position="338"/>
    </location>
</feature>
<feature type="helix" evidence="4">
    <location>
        <begin position="346"/>
        <end position="348"/>
    </location>
</feature>
<feature type="strand" evidence="4">
    <location>
        <begin position="349"/>
        <end position="357"/>
    </location>
</feature>
<feature type="strand" evidence="4">
    <location>
        <begin position="359"/>
        <end position="362"/>
    </location>
</feature>
<feature type="strand" evidence="4">
    <location>
        <begin position="368"/>
        <end position="375"/>
    </location>
</feature>
<feature type="strand" evidence="4">
    <location>
        <begin position="378"/>
        <end position="384"/>
    </location>
</feature>
<feature type="strand" evidence="4">
    <location>
        <begin position="391"/>
        <end position="396"/>
    </location>
</feature>
<reference key="1">
    <citation type="journal article" date="2002" name="Biochemistry">
        <title>The first strain of Clostridium perfringens isolated from an avian source has an alpha-toxin with divergent structural and kinetic properties.</title>
        <authorList>
            <person name="Justin N."/>
            <person name="Walker N."/>
            <person name="Bullifent H.L."/>
            <person name="Songer G."/>
            <person name="Bueschel D.M."/>
            <person name="Jost H."/>
            <person name="Naylor C.E."/>
            <person name="Miller J."/>
            <person name="Moss D.S."/>
            <person name="Titball R.W."/>
            <person name="Basak A.K."/>
        </authorList>
    </citation>
    <scope>NUCLEOTIDE SEQUENCE [GENOMIC DNA]</scope>
    <scope>CHARACTERIZATION</scope>
    <scope>X-RAY CRYSTALLOGRAPHY (2.4 ANGSTROMS) OF THE OPEN FORM</scope>
    <source>
        <strain>SWCP</strain>
    </source>
</reference>
<reference key="2">
    <citation type="journal article" date="1999" name="Anaerobe">
        <title>The Clostridium perfringens alpha-toxin.</title>
        <authorList>
            <person name="Titball R.W."/>
            <person name="Naylor C.E."/>
            <person name="Basak A.K."/>
        </authorList>
    </citation>
    <scope>REVIEW</scope>
</reference>
<reference key="3">
    <citation type="journal article" date="2000" name="Microbes Infect.">
        <title>Structure and function of clostridial phospholipases C.</title>
        <authorList>
            <person name="Jepson M."/>
            <person name="Titball R.W."/>
        </authorList>
    </citation>
    <scope>REVIEW</scope>
</reference>
<dbReference type="EC" id="3.1.4.3"/>
<dbReference type="EMBL" id="AF204209">
    <property type="protein sequence ID" value="AAF20094.1"/>
    <property type="molecule type" value="Genomic_DNA"/>
</dbReference>
<dbReference type="PDB" id="1KHO">
    <property type="method" value="X-ray"/>
    <property type="resolution" value="2.40 A"/>
    <property type="chains" value="A/B=29-398"/>
</dbReference>
<dbReference type="PDBsum" id="1KHO"/>
<dbReference type="SMR" id="Q9RF12"/>
<dbReference type="ABCD" id="Q9RF12">
    <property type="antibodies" value="1 sequenced antibody"/>
</dbReference>
<dbReference type="EvolutionaryTrace" id="Q9RF12"/>
<dbReference type="GO" id="GO:0005576">
    <property type="term" value="C:extracellular region"/>
    <property type="evidence" value="ECO:0007669"/>
    <property type="project" value="UniProtKB-SubCell"/>
</dbReference>
<dbReference type="GO" id="GO:0034480">
    <property type="term" value="F:phosphatidylcholine phospholipase C activity"/>
    <property type="evidence" value="ECO:0007669"/>
    <property type="project" value="UniProtKB-EC"/>
</dbReference>
<dbReference type="GO" id="GO:0090729">
    <property type="term" value="F:toxin activity"/>
    <property type="evidence" value="ECO:0007669"/>
    <property type="project" value="UniProtKB-KW"/>
</dbReference>
<dbReference type="GO" id="GO:0008270">
    <property type="term" value="F:zinc ion binding"/>
    <property type="evidence" value="ECO:0007669"/>
    <property type="project" value="InterPro"/>
</dbReference>
<dbReference type="GO" id="GO:0031640">
    <property type="term" value="P:killing of cells of another organism"/>
    <property type="evidence" value="ECO:0007669"/>
    <property type="project" value="UniProtKB-KW"/>
</dbReference>
<dbReference type="CDD" id="cd00113">
    <property type="entry name" value="PLAT"/>
    <property type="match status" value="1"/>
</dbReference>
<dbReference type="CDD" id="cd10981">
    <property type="entry name" value="ZnPC_S1P1"/>
    <property type="match status" value="1"/>
</dbReference>
<dbReference type="Gene3D" id="1.10.575.10">
    <property type="entry name" value="P1 Nuclease"/>
    <property type="match status" value="1"/>
</dbReference>
<dbReference type="Gene3D" id="2.60.60.20">
    <property type="entry name" value="PLAT/LH2 domain"/>
    <property type="match status" value="1"/>
</dbReference>
<dbReference type="InterPro" id="IPR001024">
    <property type="entry name" value="PLAT/LH2_dom"/>
</dbReference>
<dbReference type="InterPro" id="IPR036392">
    <property type="entry name" value="PLAT/LH2_dom_sf"/>
</dbReference>
<dbReference type="InterPro" id="IPR008947">
    <property type="entry name" value="PLipase_C/P1_nuclease_dom_sf"/>
</dbReference>
<dbReference type="InterPro" id="IPR029002">
    <property type="entry name" value="PLPC/GPLD1"/>
</dbReference>
<dbReference type="InterPro" id="IPR001531">
    <property type="entry name" value="Zn_PLipaseC"/>
</dbReference>
<dbReference type="Pfam" id="PF01477">
    <property type="entry name" value="PLAT"/>
    <property type="match status" value="1"/>
</dbReference>
<dbReference type="Pfam" id="PF00882">
    <property type="entry name" value="Zn_dep_PLPC"/>
    <property type="match status" value="1"/>
</dbReference>
<dbReference type="PRINTS" id="PR00479">
    <property type="entry name" value="PRPHPHLPASEC"/>
</dbReference>
<dbReference type="SMART" id="SM00770">
    <property type="entry name" value="Zn_dep_PLPC"/>
    <property type="match status" value="1"/>
</dbReference>
<dbReference type="SUPFAM" id="SSF49723">
    <property type="entry name" value="Lipase/lipooxygenase domain (PLAT/LH2 domain)"/>
    <property type="match status" value="1"/>
</dbReference>
<dbReference type="SUPFAM" id="SSF48537">
    <property type="entry name" value="Phospholipase C/P1 nuclease"/>
    <property type="match status" value="1"/>
</dbReference>
<dbReference type="PROSITE" id="PS50095">
    <property type="entry name" value="PLAT"/>
    <property type="match status" value="1"/>
</dbReference>
<dbReference type="PROSITE" id="PS00384">
    <property type="entry name" value="PROKAR_ZN_DEPEND_PLPC_1"/>
    <property type="match status" value="1"/>
</dbReference>
<dbReference type="PROSITE" id="PS51346">
    <property type="entry name" value="PROKAR_ZN_DEPEND_PLPC_2"/>
    <property type="match status" value="1"/>
</dbReference>
<gene>
    <name type="primary">plc</name>
    <name type="synonym">cpa</name>
</gene>
<name>PHLC_CLOPF</name>
<protein>
    <recommendedName>
        <fullName>Phospholipase C</fullName>
        <shortName>PLC</shortName>
        <ecNumber>3.1.4.3</ecNumber>
    </recommendedName>
    <alternativeName>
        <fullName>Alpha-toxin</fullName>
    </alternativeName>
    <alternativeName>
        <fullName>Hemolysin</fullName>
    </alternativeName>
    <alternativeName>
        <fullName>Lecithinase</fullName>
    </alternativeName>
    <alternativeName>
        <fullName>Phosphatidylcholine cholinephosphohydrolase</fullName>
    </alternativeName>
</protein>
<evidence type="ECO:0000250" key="1"/>
<evidence type="ECO:0000255" key="2">
    <source>
        <dbReference type="PROSITE-ProRule" id="PRU00152"/>
    </source>
</evidence>
<evidence type="ECO:0000255" key="3">
    <source>
        <dbReference type="PROSITE-ProRule" id="PRU00678"/>
    </source>
</evidence>
<evidence type="ECO:0007829" key="4">
    <source>
        <dbReference type="PDB" id="1KHO"/>
    </source>
</evidence>
<comment type="function">
    <text>Bacterial hemolysins are exotoxins that attack blood cell membranes and cause cell rupture. Constitutes an essential virulence factor in gas gangrene. Binds to eukaryotic membranes where it hydrolyzes both phosphatidylcholine and sphingomyelin, causing cell rupture. The diacylglycerol produced can activate both the arachidonic acid pathway, leading to modulation of the inflammatory response cascade and thrombosis, and protein kinase C, leading to activation of eukaryotic phospholipases and further membrane damage.</text>
</comment>
<comment type="catalytic activity">
    <reaction>
        <text>a 1,2-diacyl-sn-glycero-3-phosphocholine + H2O = phosphocholine + a 1,2-diacyl-sn-glycerol + H(+)</text>
        <dbReference type="Rhea" id="RHEA:10604"/>
        <dbReference type="ChEBI" id="CHEBI:15377"/>
        <dbReference type="ChEBI" id="CHEBI:15378"/>
        <dbReference type="ChEBI" id="CHEBI:17815"/>
        <dbReference type="ChEBI" id="CHEBI:57643"/>
        <dbReference type="ChEBI" id="CHEBI:295975"/>
        <dbReference type="EC" id="3.1.4.3"/>
    </reaction>
</comment>
<comment type="cofactor">
    <cofactor>
        <name>Ca(2+)</name>
        <dbReference type="ChEBI" id="CHEBI:29108"/>
    </cofactor>
    <text>Binds 3 Ca(2+) ions per subunit.</text>
</comment>
<comment type="cofactor">
    <cofactor>
        <name>Zn(2+)</name>
        <dbReference type="ChEBI" id="CHEBI:29105"/>
    </cofactor>
    <text>Binds 3 Zn(2+) ions per subunit.</text>
</comment>
<comment type="subcellular location">
    <subcellularLocation>
        <location>Secreted</location>
    </subcellularLocation>
</comment>
<comment type="domain">
    <text>The protein is composed of 2 domains; the N-terminal domain contains the phospholipase C active site (PLC), in a cleft which is also occupied by the 3 zinc ions. The C-terminal domain is a putative phospholipid-recognition domain, which shows structural homology with phospholipid-binding C2-like domains from a range of eukaryotic proteins. The ability to bind membrane phospholipids in a Ca(2+) dependent manner and toxicity is conferred by this C-terminal domain, which also contributes to the sphingomyelinase activity.</text>
</comment>
<comment type="miscellaneous">
    <text>This bacteria was isolated from a diseased swan.</text>
</comment>
<accession>Q9RF12</accession>
<keyword id="KW-0002">3D-structure</keyword>
<keyword id="KW-0106">Calcium</keyword>
<keyword id="KW-0204">Cytolysis</keyword>
<keyword id="KW-0354">Hemolysis</keyword>
<keyword id="KW-0378">Hydrolase</keyword>
<keyword id="KW-0479">Metal-binding</keyword>
<keyword id="KW-0964">Secreted</keyword>
<keyword id="KW-0732">Signal</keyword>
<keyword id="KW-0800">Toxin</keyword>
<keyword id="KW-0843">Virulence</keyword>
<keyword id="KW-0862">Zinc</keyword>